<sequence>MPFKDQLFLASQYLAPHHLVSRLMGRVADCRAPEIKNRMIARFVRRYNVDMSEALVEDPLAYASFNDFFTRALKPDARPLDDEPGAALCPADGAISQIGAIDNGRIFQAKGHSFGLTDLLGGDAERAAPFAGGQFATIYLSPRDYHRVHMPLAGTLREMVHVPGRLFSVNPLTARSVPELFARNERVACLFDTEHGPMALVLVGAMIVASIETVWAGLVTPHKRQVRSVRYDAAARAPIHLDKGAEMGRFKLGSTVIVLFGPKRLRWLDLPSVRGPVRMGETLALPASTAISFPESE</sequence>
<name>PSD_BORPA</name>
<keyword id="KW-1003">Cell membrane</keyword>
<keyword id="KW-0210">Decarboxylase</keyword>
<keyword id="KW-0444">Lipid biosynthesis</keyword>
<keyword id="KW-0443">Lipid metabolism</keyword>
<keyword id="KW-0456">Lyase</keyword>
<keyword id="KW-0472">Membrane</keyword>
<keyword id="KW-0594">Phospholipid biosynthesis</keyword>
<keyword id="KW-1208">Phospholipid metabolism</keyword>
<keyword id="KW-0670">Pyruvate</keyword>
<keyword id="KW-0865">Zymogen</keyword>
<feature type="chain" id="PRO_0000029635" description="Phosphatidylserine decarboxylase beta chain" evidence="1">
    <location>
        <begin position="1"/>
        <end position="253"/>
    </location>
</feature>
<feature type="chain" id="PRO_0000029636" description="Phosphatidylserine decarboxylase alpha chain" evidence="1">
    <location>
        <begin position="254"/>
        <end position="297"/>
    </location>
</feature>
<feature type="active site" description="Charge relay system; for autoendoproteolytic cleavage activity" evidence="1">
    <location>
        <position position="92"/>
    </location>
</feature>
<feature type="active site" description="Charge relay system; for autoendoproteolytic cleavage activity" evidence="1">
    <location>
        <position position="149"/>
    </location>
</feature>
<feature type="active site" description="Charge relay system; for autoendoproteolytic cleavage activity" evidence="1">
    <location>
        <position position="254"/>
    </location>
</feature>
<feature type="active site" description="Schiff-base intermediate with substrate; via pyruvic acid; for decarboxylase activity" evidence="1">
    <location>
        <position position="254"/>
    </location>
</feature>
<feature type="site" description="Cleavage (non-hydrolytic); by autocatalysis" evidence="1">
    <location>
        <begin position="253"/>
        <end position="254"/>
    </location>
</feature>
<feature type="modified residue" description="Pyruvic acid (Ser); by autocatalysis" evidence="1">
    <location>
        <position position="254"/>
    </location>
</feature>
<organism>
    <name type="scientific">Bordetella parapertussis (strain 12822 / ATCC BAA-587 / NCTC 13253)</name>
    <dbReference type="NCBI Taxonomy" id="257311"/>
    <lineage>
        <taxon>Bacteria</taxon>
        <taxon>Pseudomonadati</taxon>
        <taxon>Pseudomonadota</taxon>
        <taxon>Betaproteobacteria</taxon>
        <taxon>Burkholderiales</taxon>
        <taxon>Alcaligenaceae</taxon>
        <taxon>Bordetella</taxon>
    </lineage>
</organism>
<dbReference type="EC" id="4.1.1.65" evidence="1"/>
<dbReference type="EMBL" id="BX640432">
    <property type="protein sequence ID" value="CAE38217.1"/>
    <property type="status" value="ALT_INIT"/>
    <property type="molecule type" value="Genomic_DNA"/>
</dbReference>
<dbReference type="RefSeq" id="WP_003811301.1">
    <property type="nucleotide sequence ID" value="NC_002928.3"/>
</dbReference>
<dbReference type="SMR" id="Q7W6I5"/>
<dbReference type="GeneID" id="69601211"/>
<dbReference type="KEGG" id="bpa:BPP2924"/>
<dbReference type="HOGENOM" id="CLU_029061_4_1_4"/>
<dbReference type="UniPathway" id="UPA00558">
    <property type="reaction ID" value="UER00616"/>
</dbReference>
<dbReference type="Proteomes" id="UP000001421">
    <property type="component" value="Chromosome"/>
</dbReference>
<dbReference type="GO" id="GO:0005886">
    <property type="term" value="C:plasma membrane"/>
    <property type="evidence" value="ECO:0007669"/>
    <property type="project" value="UniProtKB-SubCell"/>
</dbReference>
<dbReference type="GO" id="GO:0004609">
    <property type="term" value="F:phosphatidylserine decarboxylase activity"/>
    <property type="evidence" value="ECO:0007669"/>
    <property type="project" value="UniProtKB-UniRule"/>
</dbReference>
<dbReference type="GO" id="GO:0006646">
    <property type="term" value="P:phosphatidylethanolamine biosynthetic process"/>
    <property type="evidence" value="ECO:0007669"/>
    <property type="project" value="UniProtKB-UniRule"/>
</dbReference>
<dbReference type="HAMAP" id="MF_00662">
    <property type="entry name" value="PS_decarb_PSD_B_type1"/>
    <property type="match status" value="1"/>
</dbReference>
<dbReference type="InterPro" id="IPR003817">
    <property type="entry name" value="PS_Dcarbxylase"/>
</dbReference>
<dbReference type="InterPro" id="IPR033177">
    <property type="entry name" value="PSD-B"/>
</dbReference>
<dbReference type="InterPro" id="IPR033178">
    <property type="entry name" value="PSD_type1_pro"/>
</dbReference>
<dbReference type="NCBIfam" id="TIGR00163">
    <property type="entry name" value="PS_decarb"/>
    <property type="match status" value="1"/>
</dbReference>
<dbReference type="PANTHER" id="PTHR10067">
    <property type="entry name" value="PHOSPHATIDYLSERINE DECARBOXYLASE"/>
    <property type="match status" value="1"/>
</dbReference>
<dbReference type="PANTHER" id="PTHR10067:SF6">
    <property type="entry name" value="PHOSPHATIDYLSERINE DECARBOXYLASE PROENZYME, MITOCHONDRIAL"/>
    <property type="match status" value="1"/>
</dbReference>
<dbReference type="Pfam" id="PF02666">
    <property type="entry name" value="PS_Dcarbxylase"/>
    <property type="match status" value="1"/>
</dbReference>
<accession>Q7W6I5</accession>
<evidence type="ECO:0000255" key="1">
    <source>
        <dbReference type="HAMAP-Rule" id="MF_00662"/>
    </source>
</evidence>
<evidence type="ECO:0000305" key="2"/>
<proteinExistence type="inferred from homology"/>
<comment type="function">
    <text evidence="1">Catalyzes the formation of phosphatidylethanolamine (PtdEtn) from phosphatidylserine (PtdSer).</text>
</comment>
<comment type="catalytic activity">
    <reaction evidence="1">
        <text>a 1,2-diacyl-sn-glycero-3-phospho-L-serine + H(+) = a 1,2-diacyl-sn-glycero-3-phosphoethanolamine + CO2</text>
        <dbReference type="Rhea" id="RHEA:20828"/>
        <dbReference type="ChEBI" id="CHEBI:15378"/>
        <dbReference type="ChEBI" id="CHEBI:16526"/>
        <dbReference type="ChEBI" id="CHEBI:57262"/>
        <dbReference type="ChEBI" id="CHEBI:64612"/>
        <dbReference type="EC" id="4.1.1.65"/>
    </reaction>
</comment>
<comment type="cofactor">
    <cofactor evidence="1">
        <name>pyruvate</name>
        <dbReference type="ChEBI" id="CHEBI:15361"/>
    </cofactor>
    <text evidence="1">Binds 1 pyruvoyl group covalently per subunit.</text>
</comment>
<comment type="pathway">
    <text evidence="1">Phospholipid metabolism; phosphatidylethanolamine biosynthesis; phosphatidylethanolamine from CDP-diacylglycerol: step 2/2.</text>
</comment>
<comment type="subunit">
    <text evidence="1">Heterodimer of a large membrane-associated beta subunit and a small pyruvoyl-containing alpha subunit.</text>
</comment>
<comment type="subcellular location">
    <subcellularLocation>
        <location evidence="1">Cell membrane</location>
        <topology evidence="1">Peripheral membrane protein</topology>
    </subcellularLocation>
</comment>
<comment type="PTM">
    <text evidence="1">Is synthesized initially as an inactive proenzyme. Formation of the active enzyme involves a self-maturation process in which the active site pyruvoyl group is generated from an internal serine residue via an autocatalytic post-translational modification. Two non-identical subunits are generated from the proenzyme in this reaction, and the pyruvate is formed at the N-terminus of the alpha chain, which is derived from the carboxyl end of the proenzyme. The autoendoproteolytic cleavage occurs by a canonical serine protease mechanism, in which the side chain hydroxyl group of the serine supplies its oxygen atom to form the C-terminus of the beta chain, while the remainder of the serine residue undergoes an oxidative deamination to produce ammonia and the pyruvoyl prosthetic group on the alpha chain. During this reaction, the Ser that is part of the protease active site of the proenzyme becomes the pyruvoyl prosthetic group, which constitutes an essential element of the active site of the mature decarboxylase.</text>
</comment>
<comment type="similarity">
    <text evidence="1">Belongs to the phosphatidylserine decarboxylase family. PSD-B subfamily. Prokaryotic type I sub-subfamily.</text>
</comment>
<comment type="sequence caution" evidence="2">
    <conflict type="erroneous initiation">
        <sequence resource="EMBL-CDS" id="CAE38217"/>
    </conflict>
</comment>
<protein>
    <recommendedName>
        <fullName evidence="1">Phosphatidylserine decarboxylase proenzyme</fullName>
        <ecNumber evidence="1">4.1.1.65</ecNumber>
    </recommendedName>
    <component>
        <recommendedName>
            <fullName evidence="1">Phosphatidylserine decarboxylase alpha chain</fullName>
        </recommendedName>
    </component>
    <component>
        <recommendedName>
            <fullName evidence="1">Phosphatidylserine decarboxylase beta chain</fullName>
        </recommendedName>
    </component>
</protein>
<reference key="1">
    <citation type="journal article" date="2003" name="Nat. Genet.">
        <title>Comparative analysis of the genome sequences of Bordetella pertussis, Bordetella parapertussis and Bordetella bronchiseptica.</title>
        <authorList>
            <person name="Parkhill J."/>
            <person name="Sebaihia M."/>
            <person name="Preston A."/>
            <person name="Murphy L.D."/>
            <person name="Thomson N.R."/>
            <person name="Harris D.E."/>
            <person name="Holden M.T.G."/>
            <person name="Churcher C.M."/>
            <person name="Bentley S.D."/>
            <person name="Mungall K.L."/>
            <person name="Cerdeno-Tarraga A.-M."/>
            <person name="Temple L."/>
            <person name="James K.D."/>
            <person name="Harris B."/>
            <person name="Quail M.A."/>
            <person name="Achtman M."/>
            <person name="Atkin R."/>
            <person name="Baker S."/>
            <person name="Basham D."/>
            <person name="Bason N."/>
            <person name="Cherevach I."/>
            <person name="Chillingworth T."/>
            <person name="Collins M."/>
            <person name="Cronin A."/>
            <person name="Davis P."/>
            <person name="Doggett J."/>
            <person name="Feltwell T."/>
            <person name="Goble A."/>
            <person name="Hamlin N."/>
            <person name="Hauser H."/>
            <person name="Holroyd S."/>
            <person name="Jagels K."/>
            <person name="Leather S."/>
            <person name="Moule S."/>
            <person name="Norberczak H."/>
            <person name="O'Neil S."/>
            <person name="Ormond D."/>
            <person name="Price C."/>
            <person name="Rabbinowitsch E."/>
            <person name="Rutter S."/>
            <person name="Sanders M."/>
            <person name="Saunders D."/>
            <person name="Seeger K."/>
            <person name="Sharp S."/>
            <person name="Simmonds M."/>
            <person name="Skelton J."/>
            <person name="Squares R."/>
            <person name="Squares S."/>
            <person name="Stevens K."/>
            <person name="Unwin L."/>
            <person name="Whitehead S."/>
            <person name="Barrell B.G."/>
            <person name="Maskell D.J."/>
        </authorList>
    </citation>
    <scope>NUCLEOTIDE SEQUENCE [LARGE SCALE GENOMIC DNA]</scope>
    <source>
        <strain>12822 / ATCC BAA-587 / NCTC 13253</strain>
    </source>
</reference>
<gene>
    <name evidence="1" type="primary">psd</name>
    <name type="ordered locus">BPP2924</name>
</gene>